<gene>
    <name evidence="1" type="primary">hldE</name>
    <name type="ordered locus">VFMJ11_2345</name>
</gene>
<keyword id="KW-0067">ATP-binding</keyword>
<keyword id="KW-0119">Carbohydrate metabolism</keyword>
<keyword id="KW-0418">Kinase</keyword>
<keyword id="KW-0511">Multifunctional enzyme</keyword>
<keyword id="KW-0547">Nucleotide-binding</keyword>
<keyword id="KW-0548">Nucleotidyltransferase</keyword>
<keyword id="KW-0808">Transferase</keyword>
<evidence type="ECO:0000255" key="1">
    <source>
        <dbReference type="HAMAP-Rule" id="MF_01603"/>
    </source>
</evidence>
<sequence length="476" mass="50725">MKPTLPNYDQSSVLIVGDVMLDRYWGGPTSRISPEAPVPVVKVEKIEERPGGAANVAMNIAALGGDAHLVGLVGEDEPAQALTTTLESLKVHCDFVALPEFPTITKLRVMSRGQQLIRLDFEDSFHDVAAEPIISRMQQALSSVKAVVLSDYAKGALEHVQSMIQEARKVNVPVFIDPKGADFERYRGATLLTPNMLEFETVVGKVKDEDDLVAKGQQIIEEFDFEALLVTRSEHGMTLLRRNMEPLHLPTQAREVFDVTGAGDTVISVLAASVSTGKPLDEACALANAAAGVVVGKLGTSTLSTIELAEAIHGSQDSGFGIIGEEQLISAVKQARARGEKVVMTNGCFDILHAGHVSYLNHAAELGDRLIVAVNTNESVQRLKGPGRPINPTDRRMAVLAGLGAVDWVVPFSEDTPQRLISQVLPSLLVKGGDYAIEDIAGGAEVIAAGGEVKVLNFEDGCSTTGIIEAIKGGRG</sequence>
<accession>B5FB67</accession>
<feature type="chain" id="PRO_1000148135" description="Bifunctional protein HldE">
    <location>
        <begin position="1"/>
        <end position="476"/>
    </location>
</feature>
<feature type="region of interest" description="Ribokinase">
    <location>
        <begin position="1"/>
        <end position="318"/>
    </location>
</feature>
<feature type="region of interest" description="Cytidylyltransferase">
    <location>
        <begin position="344"/>
        <end position="476"/>
    </location>
</feature>
<feature type="active site" evidence="1">
    <location>
        <position position="264"/>
    </location>
</feature>
<feature type="binding site" evidence="1">
    <location>
        <begin position="195"/>
        <end position="198"/>
    </location>
    <ligand>
        <name>ATP</name>
        <dbReference type="ChEBI" id="CHEBI:30616"/>
    </ligand>
</feature>
<protein>
    <recommendedName>
        <fullName evidence="1">Bifunctional protein HldE</fullName>
    </recommendedName>
    <domain>
        <recommendedName>
            <fullName evidence="1">D-beta-D-heptose 7-phosphate kinase</fullName>
            <ecNumber evidence="1">2.7.1.167</ecNumber>
        </recommendedName>
        <alternativeName>
            <fullName evidence="1">D-beta-D-heptose 7-phosphotransferase</fullName>
        </alternativeName>
        <alternativeName>
            <fullName evidence="1">D-glycero-beta-D-manno-heptose-7-phosphate kinase</fullName>
        </alternativeName>
    </domain>
    <domain>
        <recommendedName>
            <fullName evidence="1">D-beta-D-heptose 1-phosphate adenylyltransferase</fullName>
            <ecNumber evidence="1">2.7.7.70</ecNumber>
        </recommendedName>
        <alternativeName>
            <fullName evidence="1">D-glycero-beta-D-manno-heptose 1-phosphate adenylyltransferase</fullName>
        </alternativeName>
    </domain>
</protein>
<comment type="function">
    <text evidence="1">Catalyzes the phosphorylation of D-glycero-D-manno-heptose 7-phosphate at the C-1 position to selectively form D-glycero-beta-D-manno-heptose-1,7-bisphosphate.</text>
</comment>
<comment type="function">
    <text evidence="1">Catalyzes the ADP transfer from ATP to D-glycero-beta-D-manno-heptose 1-phosphate, yielding ADP-D-glycero-beta-D-manno-heptose.</text>
</comment>
<comment type="catalytic activity">
    <reaction evidence="1">
        <text>D-glycero-beta-D-manno-heptose 7-phosphate + ATP = D-glycero-beta-D-manno-heptose 1,7-bisphosphate + ADP + H(+)</text>
        <dbReference type="Rhea" id="RHEA:27473"/>
        <dbReference type="ChEBI" id="CHEBI:15378"/>
        <dbReference type="ChEBI" id="CHEBI:30616"/>
        <dbReference type="ChEBI" id="CHEBI:60204"/>
        <dbReference type="ChEBI" id="CHEBI:60208"/>
        <dbReference type="ChEBI" id="CHEBI:456216"/>
        <dbReference type="EC" id="2.7.1.167"/>
    </reaction>
</comment>
<comment type="catalytic activity">
    <reaction evidence="1">
        <text>D-glycero-beta-D-manno-heptose 1-phosphate + ATP + H(+) = ADP-D-glycero-beta-D-manno-heptose + diphosphate</text>
        <dbReference type="Rhea" id="RHEA:27465"/>
        <dbReference type="ChEBI" id="CHEBI:15378"/>
        <dbReference type="ChEBI" id="CHEBI:30616"/>
        <dbReference type="ChEBI" id="CHEBI:33019"/>
        <dbReference type="ChEBI" id="CHEBI:59967"/>
        <dbReference type="ChEBI" id="CHEBI:61593"/>
        <dbReference type="EC" id="2.7.7.70"/>
    </reaction>
</comment>
<comment type="pathway">
    <text evidence="1">Nucleotide-sugar biosynthesis; ADP-L-glycero-beta-D-manno-heptose biosynthesis; ADP-L-glycero-beta-D-manno-heptose from D-glycero-beta-D-manno-heptose 7-phosphate: step 1/4.</text>
</comment>
<comment type="pathway">
    <text evidence="1">Nucleotide-sugar biosynthesis; ADP-L-glycero-beta-D-manno-heptose biosynthesis; ADP-L-glycero-beta-D-manno-heptose from D-glycero-beta-D-manno-heptose 7-phosphate: step 3/4.</text>
</comment>
<comment type="subunit">
    <text evidence="1">Homodimer.</text>
</comment>
<comment type="similarity">
    <text evidence="1">In the N-terminal section; belongs to the carbohydrate kinase PfkB family.</text>
</comment>
<comment type="similarity">
    <text evidence="1">In the C-terminal section; belongs to the cytidylyltransferase family.</text>
</comment>
<proteinExistence type="inferred from homology"/>
<name>HLDE_ALIFM</name>
<dbReference type="EC" id="2.7.1.167" evidence="1"/>
<dbReference type="EC" id="2.7.7.70" evidence="1"/>
<dbReference type="EMBL" id="CP001139">
    <property type="protein sequence ID" value="ACH67115.1"/>
    <property type="molecule type" value="Genomic_DNA"/>
</dbReference>
<dbReference type="RefSeq" id="WP_012534207.1">
    <property type="nucleotide sequence ID" value="NC_011184.1"/>
</dbReference>
<dbReference type="SMR" id="B5FB67"/>
<dbReference type="KEGG" id="vfm:VFMJ11_2345"/>
<dbReference type="HOGENOM" id="CLU_021150_2_1_6"/>
<dbReference type="UniPathway" id="UPA00356">
    <property type="reaction ID" value="UER00437"/>
</dbReference>
<dbReference type="UniPathway" id="UPA00356">
    <property type="reaction ID" value="UER00439"/>
</dbReference>
<dbReference type="Proteomes" id="UP000001857">
    <property type="component" value="Chromosome I"/>
</dbReference>
<dbReference type="GO" id="GO:0005829">
    <property type="term" value="C:cytosol"/>
    <property type="evidence" value="ECO:0007669"/>
    <property type="project" value="TreeGrafter"/>
</dbReference>
<dbReference type="GO" id="GO:0005524">
    <property type="term" value="F:ATP binding"/>
    <property type="evidence" value="ECO:0007669"/>
    <property type="project" value="UniProtKB-UniRule"/>
</dbReference>
<dbReference type="GO" id="GO:0033785">
    <property type="term" value="F:heptose 7-phosphate kinase activity"/>
    <property type="evidence" value="ECO:0007669"/>
    <property type="project" value="UniProtKB-UniRule"/>
</dbReference>
<dbReference type="GO" id="GO:0033786">
    <property type="term" value="F:heptose-1-phosphate adenylyltransferase activity"/>
    <property type="evidence" value="ECO:0007669"/>
    <property type="project" value="UniProtKB-UniRule"/>
</dbReference>
<dbReference type="GO" id="GO:0016773">
    <property type="term" value="F:phosphotransferase activity, alcohol group as acceptor"/>
    <property type="evidence" value="ECO:0007669"/>
    <property type="project" value="InterPro"/>
</dbReference>
<dbReference type="GO" id="GO:0097171">
    <property type="term" value="P:ADP-L-glycero-beta-D-manno-heptose biosynthetic process"/>
    <property type="evidence" value="ECO:0007669"/>
    <property type="project" value="UniProtKB-UniPathway"/>
</dbReference>
<dbReference type="CDD" id="cd01172">
    <property type="entry name" value="RfaE_like"/>
    <property type="match status" value="1"/>
</dbReference>
<dbReference type="FunFam" id="3.40.1190.20:FF:000002">
    <property type="entry name" value="Bifunctional protein HldE"/>
    <property type="match status" value="1"/>
</dbReference>
<dbReference type="FunFam" id="3.40.50.620:FF:000028">
    <property type="entry name" value="Bifunctional protein HldE"/>
    <property type="match status" value="1"/>
</dbReference>
<dbReference type="Gene3D" id="3.40.1190.20">
    <property type="match status" value="1"/>
</dbReference>
<dbReference type="Gene3D" id="3.40.50.620">
    <property type="entry name" value="HUPs"/>
    <property type="match status" value="1"/>
</dbReference>
<dbReference type="HAMAP" id="MF_01603">
    <property type="entry name" value="HldE"/>
    <property type="match status" value="1"/>
</dbReference>
<dbReference type="InterPro" id="IPR023030">
    <property type="entry name" value="Bifunc_HldE"/>
</dbReference>
<dbReference type="InterPro" id="IPR002173">
    <property type="entry name" value="Carboh/pur_kinase_PfkB_CS"/>
</dbReference>
<dbReference type="InterPro" id="IPR004821">
    <property type="entry name" value="Cyt_trans-like"/>
</dbReference>
<dbReference type="InterPro" id="IPR011611">
    <property type="entry name" value="PfkB_dom"/>
</dbReference>
<dbReference type="InterPro" id="IPR011913">
    <property type="entry name" value="RfaE_dom_I"/>
</dbReference>
<dbReference type="InterPro" id="IPR011914">
    <property type="entry name" value="RfaE_dom_II"/>
</dbReference>
<dbReference type="InterPro" id="IPR029056">
    <property type="entry name" value="Ribokinase-like"/>
</dbReference>
<dbReference type="InterPro" id="IPR014729">
    <property type="entry name" value="Rossmann-like_a/b/a_fold"/>
</dbReference>
<dbReference type="NCBIfam" id="TIGR00125">
    <property type="entry name" value="cyt_tran_rel"/>
    <property type="match status" value="1"/>
</dbReference>
<dbReference type="NCBIfam" id="NF008454">
    <property type="entry name" value="PRK11316.1"/>
    <property type="match status" value="1"/>
</dbReference>
<dbReference type="NCBIfam" id="TIGR02198">
    <property type="entry name" value="rfaE_dom_I"/>
    <property type="match status" value="1"/>
</dbReference>
<dbReference type="NCBIfam" id="TIGR02199">
    <property type="entry name" value="rfaE_dom_II"/>
    <property type="match status" value="1"/>
</dbReference>
<dbReference type="PANTHER" id="PTHR46969">
    <property type="entry name" value="BIFUNCTIONAL PROTEIN HLDE"/>
    <property type="match status" value="1"/>
</dbReference>
<dbReference type="PANTHER" id="PTHR46969:SF1">
    <property type="entry name" value="BIFUNCTIONAL PROTEIN HLDE"/>
    <property type="match status" value="1"/>
</dbReference>
<dbReference type="Pfam" id="PF01467">
    <property type="entry name" value="CTP_transf_like"/>
    <property type="match status" value="1"/>
</dbReference>
<dbReference type="Pfam" id="PF00294">
    <property type="entry name" value="PfkB"/>
    <property type="match status" value="1"/>
</dbReference>
<dbReference type="SUPFAM" id="SSF52374">
    <property type="entry name" value="Nucleotidylyl transferase"/>
    <property type="match status" value="1"/>
</dbReference>
<dbReference type="SUPFAM" id="SSF53613">
    <property type="entry name" value="Ribokinase-like"/>
    <property type="match status" value="1"/>
</dbReference>
<dbReference type="PROSITE" id="PS00583">
    <property type="entry name" value="PFKB_KINASES_1"/>
    <property type="match status" value="1"/>
</dbReference>
<reference key="1">
    <citation type="submission" date="2008-08" db="EMBL/GenBank/DDBJ databases">
        <title>Complete sequence of Vibrio fischeri strain MJ11.</title>
        <authorList>
            <person name="Mandel M.J."/>
            <person name="Stabb E.V."/>
            <person name="Ruby E.G."/>
            <person name="Ferriera S."/>
            <person name="Johnson J."/>
            <person name="Kravitz S."/>
            <person name="Beeson K."/>
            <person name="Sutton G."/>
            <person name="Rogers Y.-H."/>
            <person name="Friedman R."/>
            <person name="Frazier M."/>
            <person name="Venter J.C."/>
        </authorList>
    </citation>
    <scope>NUCLEOTIDE SEQUENCE [LARGE SCALE GENOMIC DNA]</scope>
    <source>
        <strain>MJ11</strain>
    </source>
</reference>
<organism>
    <name type="scientific">Aliivibrio fischeri (strain MJ11)</name>
    <name type="common">Vibrio fischeri</name>
    <dbReference type="NCBI Taxonomy" id="388396"/>
    <lineage>
        <taxon>Bacteria</taxon>
        <taxon>Pseudomonadati</taxon>
        <taxon>Pseudomonadota</taxon>
        <taxon>Gammaproteobacteria</taxon>
        <taxon>Vibrionales</taxon>
        <taxon>Vibrionaceae</taxon>
        <taxon>Aliivibrio</taxon>
    </lineage>
</organism>